<protein>
    <recommendedName>
        <fullName evidence="1">Bifunctional protein GlmU</fullName>
    </recommendedName>
    <domain>
        <recommendedName>
            <fullName evidence="1">UDP-N-acetylglucosamine pyrophosphorylase</fullName>
            <ecNumber evidence="1">2.7.7.23</ecNumber>
        </recommendedName>
        <alternativeName>
            <fullName evidence="1">N-acetylglucosamine-1-phosphate uridyltransferase</fullName>
        </alternativeName>
    </domain>
    <domain>
        <recommendedName>
            <fullName evidence="1">Glucosamine-1-phosphate N-acetyltransferase</fullName>
            <ecNumber evidence="1">2.3.1.157</ecNumber>
        </recommendedName>
    </domain>
</protein>
<feature type="chain" id="PRO_1000186431" description="Bifunctional protein GlmU">
    <location>
        <begin position="1"/>
        <end position="455"/>
    </location>
</feature>
<feature type="region of interest" description="Pyrophosphorylase" evidence="1">
    <location>
        <begin position="1"/>
        <end position="227"/>
    </location>
</feature>
<feature type="region of interest" description="Linker" evidence="1">
    <location>
        <begin position="228"/>
        <end position="248"/>
    </location>
</feature>
<feature type="region of interest" description="N-acetyltransferase" evidence="1">
    <location>
        <begin position="249"/>
        <end position="455"/>
    </location>
</feature>
<feature type="active site" description="Proton acceptor" evidence="1">
    <location>
        <position position="362"/>
    </location>
</feature>
<feature type="binding site" evidence="1">
    <location>
        <begin position="8"/>
        <end position="11"/>
    </location>
    <ligand>
        <name>UDP-N-acetyl-alpha-D-glucosamine</name>
        <dbReference type="ChEBI" id="CHEBI:57705"/>
    </ligand>
</feature>
<feature type="binding site" evidence="1">
    <location>
        <position position="22"/>
    </location>
    <ligand>
        <name>UDP-N-acetyl-alpha-D-glucosamine</name>
        <dbReference type="ChEBI" id="CHEBI:57705"/>
    </ligand>
</feature>
<feature type="binding site" evidence="1">
    <location>
        <position position="73"/>
    </location>
    <ligand>
        <name>UDP-N-acetyl-alpha-D-glucosamine</name>
        <dbReference type="ChEBI" id="CHEBI:57705"/>
    </ligand>
</feature>
<feature type="binding site" evidence="1">
    <location>
        <begin position="78"/>
        <end position="79"/>
    </location>
    <ligand>
        <name>UDP-N-acetyl-alpha-D-glucosamine</name>
        <dbReference type="ChEBI" id="CHEBI:57705"/>
    </ligand>
</feature>
<feature type="binding site" evidence="1">
    <location>
        <begin position="100"/>
        <end position="102"/>
    </location>
    <ligand>
        <name>UDP-N-acetyl-alpha-D-glucosamine</name>
        <dbReference type="ChEBI" id="CHEBI:57705"/>
    </ligand>
</feature>
<feature type="binding site" evidence="1">
    <location>
        <position position="102"/>
    </location>
    <ligand>
        <name>Mg(2+)</name>
        <dbReference type="ChEBI" id="CHEBI:18420"/>
    </ligand>
</feature>
<feature type="binding site" evidence="1">
    <location>
        <position position="137"/>
    </location>
    <ligand>
        <name>UDP-N-acetyl-alpha-D-glucosamine</name>
        <dbReference type="ChEBI" id="CHEBI:57705"/>
    </ligand>
</feature>
<feature type="binding site" evidence="1">
    <location>
        <position position="152"/>
    </location>
    <ligand>
        <name>UDP-N-acetyl-alpha-D-glucosamine</name>
        <dbReference type="ChEBI" id="CHEBI:57705"/>
    </ligand>
</feature>
<feature type="binding site" evidence="1">
    <location>
        <position position="167"/>
    </location>
    <ligand>
        <name>UDP-N-acetyl-alpha-D-glucosamine</name>
        <dbReference type="ChEBI" id="CHEBI:57705"/>
    </ligand>
</feature>
<feature type="binding site" evidence="1">
    <location>
        <position position="225"/>
    </location>
    <ligand>
        <name>Mg(2+)</name>
        <dbReference type="ChEBI" id="CHEBI:18420"/>
    </ligand>
</feature>
<feature type="binding site" evidence="1">
    <location>
        <position position="225"/>
    </location>
    <ligand>
        <name>UDP-N-acetyl-alpha-D-glucosamine</name>
        <dbReference type="ChEBI" id="CHEBI:57705"/>
    </ligand>
</feature>
<feature type="binding site" evidence="1">
    <location>
        <position position="332"/>
    </location>
    <ligand>
        <name>UDP-N-acetyl-alpha-D-glucosamine</name>
        <dbReference type="ChEBI" id="CHEBI:57705"/>
    </ligand>
</feature>
<feature type="binding site" evidence="1">
    <location>
        <position position="350"/>
    </location>
    <ligand>
        <name>UDP-N-acetyl-alpha-D-glucosamine</name>
        <dbReference type="ChEBI" id="CHEBI:57705"/>
    </ligand>
</feature>
<feature type="binding site" evidence="1">
    <location>
        <position position="365"/>
    </location>
    <ligand>
        <name>UDP-N-acetyl-alpha-D-glucosamine</name>
        <dbReference type="ChEBI" id="CHEBI:57705"/>
    </ligand>
</feature>
<feature type="binding site" evidence="1">
    <location>
        <position position="376"/>
    </location>
    <ligand>
        <name>UDP-N-acetyl-alpha-D-glucosamine</name>
        <dbReference type="ChEBI" id="CHEBI:57705"/>
    </ligand>
</feature>
<feature type="binding site" evidence="1">
    <location>
        <position position="379"/>
    </location>
    <ligand>
        <name>acetyl-CoA</name>
        <dbReference type="ChEBI" id="CHEBI:57288"/>
    </ligand>
</feature>
<feature type="binding site" evidence="1">
    <location>
        <begin position="385"/>
        <end position="386"/>
    </location>
    <ligand>
        <name>acetyl-CoA</name>
        <dbReference type="ChEBI" id="CHEBI:57288"/>
    </ligand>
</feature>
<feature type="binding site" evidence="1">
    <location>
        <position position="404"/>
    </location>
    <ligand>
        <name>acetyl-CoA</name>
        <dbReference type="ChEBI" id="CHEBI:57288"/>
    </ligand>
</feature>
<feature type="binding site" evidence="1">
    <location>
        <position position="422"/>
    </location>
    <ligand>
        <name>acetyl-CoA</name>
        <dbReference type="ChEBI" id="CHEBI:57288"/>
    </ligand>
</feature>
<feature type="binding site" evidence="1">
    <location>
        <position position="439"/>
    </location>
    <ligand>
        <name>acetyl-CoA</name>
        <dbReference type="ChEBI" id="CHEBI:57288"/>
    </ligand>
</feature>
<reference key="1">
    <citation type="journal article" date="2009" name="Infect. Immun.">
        <title>Comparative genomics reveal extensive transposon-mediated genomic plasticity and diversity among potential effector proteins within the genus Coxiella.</title>
        <authorList>
            <person name="Beare P.A."/>
            <person name="Unsworth N."/>
            <person name="Andoh M."/>
            <person name="Voth D.E."/>
            <person name="Omsland A."/>
            <person name="Gilk S.D."/>
            <person name="Williams K.P."/>
            <person name="Sobral B.W."/>
            <person name="Kupko J.J. III"/>
            <person name="Porcella S.F."/>
            <person name="Samuel J.E."/>
            <person name="Heinzen R.A."/>
        </authorList>
    </citation>
    <scope>NUCLEOTIDE SEQUENCE [LARGE SCALE GENOMIC DNA]</scope>
    <source>
        <strain>CbuK_Q154</strain>
    </source>
</reference>
<sequence>MGLSVIILAAGQGKRMASSTPKILHPLGGIPLLERVVNTARLLNPHTIHVVYGNGGSHVREKLNYLPVHWIEQSQQLGTGHAVLQAIPFCQNEDRVLILYGDVPLISPKTLNSLLENTPSNGLGVVVAELPDPTGLGRIIRDDFGNILSIVEHKDAAEHQLKIREINTGIMTTTAMNLKKWLPQLNNNNCQKEYYLTDTVALAVAEGCPVGGVAAQCCEEVQGVNDRWELTKLERYYQRLMAKKLSLAGVTIIDPERFDARGENIEIAPDVVIDVNVILEGNVQLDRNVRIGPNVILKNTTVGENTEIHANSVIEAAVIKANCSVGPFARLRPGSVLEEGAKVGNFVEMKKTTLGRGSKANHLTYLGDTIIGKNVNVGAGTITCNYDGANKWQTKIEDGAFIGSNVALVAPLTVGKNATIGAGSTLSQDAPPDQLTVARERQRTIKGWHRPTKKE</sequence>
<comment type="function">
    <text evidence="1">Catalyzes the last two sequential reactions in the de novo biosynthetic pathway for UDP-N-acetylglucosamine (UDP-GlcNAc). The C-terminal domain catalyzes the transfer of acetyl group from acetyl coenzyme A to glucosamine-1-phosphate (GlcN-1-P) to produce N-acetylglucosamine-1-phosphate (GlcNAc-1-P), which is converted into UDP-GlcNAc by the transfer of uridine 5-monophosphate (from uridine 5-triphosphate), a reaction catalyzed by the N-terminal domain.</text>
</comment>
<comment type="catalytic activity">
    <reaction evidence="1">
        <text>alpha-D-glucosamine 1-phosphate + acetyl-CoA = N-acetyl-alpha-D-glucosamine 1-phosphate + CoA + H(+)</text>
        <dbReference type="Rhea" id="RHEA:13725"/>
        <dbReference type="ChEBI" id="CHEBI:15378"/>
        <dbReference type="ChEBI" id="CHEBI:57287"/>
        <dbReference type="ChEBI" id="CHEBI:57288"/>
        <dbReference type="ChEBI" id="CHEBI:57776"/>
        <dbReference type="ChEBI" id="CHEBI:58516"/>
        <dbReference type="EC" id="2.3.1.157"/>
    </reaction>
</comment>
<comment type="catalytic activity">
    <reaction evidence="1">
        <text>N-acetyl-alpha-D-glucosamine 1-phosphate + UTP + H(+) = UDP-N-acetyl-alpha-D-glucosamine + diphosphate</text>
        <dbReference type="Rhea" id="RHEA:13509"/>
        <dbReference type="ChEBI" id="CHEBI:15378"/>
        <dbReference type="ChEBI" id="CHEBI:33019"/>
        <dbReference type="ChEBI" id="CHEBI:46398"/>
        <dbReference type="ChEBI" id="CHEBI:57705"/>
        <dbReference type="ChEBI" id="CHEBI:57776"/>
        <dbReference type="EC" id="2.7.7.23"/>
    </reaction>
</comment>
<comment type="cofactor">
    <cofactor evidence="1">
        <name>Mg(2+)</name>
        <dbReference type="ChEBI" id="CHEBI:18420"/>
    </cofactor>
    <text evidence="1">Binds 1 Mg(2+) ion per subunit.</text>
</comment>
<comment type="pathway">
    <text evidence="1">Nucleotide-sugar biosynthesis; UDP-N-acetyl-alpha-D-glucosamine biosynthesis; N-acetyl-alpha-D-glucosamine 1-phosphate from alpha-D-glucosamine 6-phosphate (route II): step 2/2.</text>
</comment>
<comment type="pathway">
    <text evidence="1">Nucleotide-sugar biosynthesis; UDP-N-acetyl-alpha-D-glucosamine biosynthesis; UDP-N-acetyl-alpha-D-glucosamine from N-acetyl-alpha-D-glucosamine 1-phosphate: step 1/1.</text>
</comment>
<comment type="pathway">
    <text evidence="1">Bacterial outer membrane biogenesis; LPS lipid A biosynthesis.</text>
</comment>
<comment type="subunit">
    <text evidence="1">Homotrimer.</text>
</comment>
<comment type="subcellular location">
    <subcellularLocation>
        <location evidence="1">Cytoplasm</location>
    </subcellularLocation>
</comment>
<comment type="similarity">
    <text evidence="1">In the N-terminal section; belongs to the N-acetylglucosamine-1-phosphate uridyltransferase family.</text>
</comment>
<comment type="similarity">
    <text evidence="1">In the C-terminal section; belongs to the transferase hexapeptide repeat family.</text>
</comment>
<keyword id="KW-0012">Acyltransferase</keyword>
<keyword id="KW-0133">Cell shape</keyword>
<keyword id="KW-0961">Cell wall biogenesis/degradation</keyword>
<keyword id="KW-0963">Cytoplasm</keyword>
<keyword id="KW-0460">Magnesium</keyword>
<keyword id="KW-0479">Metal-binding</keyword>
<keyword id="KW-0511">Multifunctional enzyme</keyword>
<keyword id="KW-0548">Nucleotidyltransferase</keyword>
<keyword id="KW-0573">Peptidoglycan synthesis</keyword>
<keyword id="KW-0677">Repeat</keyword>
<keyword id="KW-0808">Transferase</keyword>
<proteinExistence type="inferred from homology"/>
<gene>
    <name evidence="1" type="primary">glmU</name>
    <name type="ordered locus">CbuK_0055</name>
</gene>
<organism>
    <name type="scientific">Coxiella burnetii (strain CbuK_Q154)</name>
    <name type="common">Coxiella burnetii (strain Q154)</name>
    <dbReference type="NCBI Taxonomy" id="434924"/>
    <lineage>
        <taxon>Bacteria</taxon>
        <taxon>Pseudomonadati</taxon>
        <taxon>Pseudomonadota</taxon>
        <taxon>Gammaproteobacteria</taxon>
        <taxon>Legionellales</taxon>
        <taxon>Coxiellaceae</taxon>
        <taxon>Coxiella</taxon>
    </lineage>
</organism>
<name>GLMU_COXB1</name>
<accession>B6J965</accession>
<evidence type="ECO:0000255" key="1">
    <source>
        <dbReference type="HAMAP-Rule" id="MF_01631"/>
    </source>
</evidence>
<dbReference type="EC" id="2.7.7.23" evidence="1"/>
<dbReference type="EC" id="2.3.1.157" evidence="1"/>
<dbReference type="EMBL" id="CP001020">
    <property type="protein sequence ID" value="ACJ19382.1"/>
    <property type="molecule type" value="Genomic_DNA"/>
</dbReference>
<dbReference type="RefSeq" id="WP_005770048.1">
    <property type="nucleotide sequence ID" value="NC_011528.1"/>
</dbReference>
<dbReference type="SMR" id="B6J965"/>
<dbReference type="KEGG" id="cbc:CbuK_0055"/>
<dbReference type="HOGENOM" id="CLU_029499_15_2_6"/>
<dbReference type="UniPathway" id="UPA00113">
    <property type="reaction ID" value="UER00532"/>
</dbReference>
<dbReference type="UniPathway" id="UPA00113">
    <property type="reaction ID" value="UER00533"/>
</dbReference>
<dbReference type="UniPathway" id="UPA00973"/>
<dbReference type="GO" id="GO:0005737">
    <property type="term" value="C:cytoplasm"/>
    <property type="evidence" value="ECO:0007669"/>
    <property type="project" value="UniProtKB-SubCell"/>
</dbReference>
<dbReference type="GO" id="GO:0016020">
    <property type="term" value="C:membrane"/>
    <property type="evidence" value="ECO:0007669"/>
    <property type="project" value="GOC"/>
</dbReference>
<dbReference type="GO" id="GO:0019134">
    <property type="term" value="F:glucosamine-1-phosphate N-acetyltransferase activity"/>
    <property type="evidence" value="ECO:0007669"/>
    <property type="project" value="UniProtKB-UniRule"/>
</dbReference>
<dbReference type="GO" id="GO:0000287">
    <property type="term" value="F:magnesium ion binding"/>
    <property type="evidence" value="ECO:0007669"/>
    <property type="project" value="UniProtKB-UniRule"/>
</dbReference>
<dbReference type="GO" id="GO:0003977">
    <property type="term" value="F:UDP-N-acetylglucosamine diphosphorylase activity"/>
    <property type="evidence" value="ECO:0007669"/>
    <property type="project" value="UniProtKB-UniRule"/>
</dbReference>
<dbReference type="GO" id="GO:0000902">
    <property type="term" value="P:cell morphogenesis"/>
    <property type="evidence" value="ECO:0007669"/>
    <property type="project" value="UniProtKB-UniRule"/>
</dbReference>
<dbReference type="GO" id="GO:0071555">
    <property type="term" value="P:cell wall organization"/>
    <property type="evidence" value="ECO:0007669"/>
    <property type="project" value="UniProtKB-KW"/>
</dbReference>
<dbReference type="GO" id="GO:0009245">
    <property type="term" value="P:lipid A biosynthetic process"/>
    <property type="evidence" value="ECO:0007669"/>
    <property type="project" value="UniProtKB-UniRule"/>
</dbReference>
<dbReference type="GO" id="GO:0009252">
    <property type="term" value="P:peptidoglycan biosynthetic process"/>
    <property type="evidence" value="ECO:0007669"/>
    <property type="project" value="UniProtKB-UniRule"/>
</dbReference>
<dbReference type="GO" id="GO:0008360">
    <property type="term" value="P:regulation of cell shape"/>
    <property type="evidence" value="ECO:0007669"/>
    <property type="project" value="UniProtKB-KW"/>
</dbReference>
<dbReference type="GO" id="GO:0006048">
    <property type="term" value="P:UDP-N-acetylglucosamine biosynthetic process"/>
    <property type="evidence" value="ECO:0007669"/>
    <property type="project" value="UniProtKB-UniPathway"/>
</dbReference>
<dbReference type="CDD" id="cd02540">
    <property type="entry name" value="GT2_GlmU_N_bac"/>
    <property type="match status" value="1"/>
</dbReference>
<dbReference type="CDD" id="cd03353">
    <property type="entry name" value="LbH_GlmU_C"/>
    <property type="match status" value="1"/>
</dbReference>
<dbReference type="Gene3D" id="2.160.10.10">
    <property type="entry name" value="Hexapeptide repeat proteins"/>
    <property type="match status" value="1"/>
</dbReference>
<dbReference type="Gene3D" id="3.90.550.10">
    <property type="entry name" value="Spore Coat Polysaccharide Biosynthesis Protein SpsA, Chain A"/>
    <property type="match status" value="1"/>
</dbReference>
<dbReference type="HAMAP" id="MF_01631">
    <property type="entry name" value="GlmU"/>
    <property type="match status" value="1"/>
</dbReference>
<dbReference type="InterPro" id="IPR005882">
    <property type="entry name" value="Bifunctional_GlmU"/>
</dbReference>
<dbReference type="InterPro" id="IPR050065">
    <property type="entry name" value="GlmU-like"/>
</dbReference>
<dbReference type="InterPro" id="IPR038009">
    <property type="entry name" value="GlmU_C_LbH"/>
</dbReference>
<dbReference type="InterPro" id="IPR001451">
    <property type="entry name" value="Hexapep"/>
</dbReference>
<dbReference type="InterPro" id="IPR018357">
    <property type="entry name" value="Hexapep_transf_CS"/>
</dbReference>
<dbReference type="InterPro" id="IPR025877">
    <property type="entry name" value="MobA-like_NTP_Trfase"/>
</dbReference>
<dbReference type="InterPro" id="IPR029044">
    <property type="entry name" value="Nucleotide-diphossugar_trans"/>
</dbReference>
<dbReference type="InterPro" id="IPR011004">
    <property type="entry name" value="Trimer_LpxA-like_sf"/>
</dbReference>
<dbReference type="NCBIfam" id="TIGR01173">
    <property type="entry name" value="glmU"/>
    <property type="match status" value="1"/>
</dbReference>
<dbReference type="PANTHER" id="PTHR43584:SF3">
    <property type="entry name" value="BIFUNCTIONAL PROTEIN GLMU"/>
    <property type="match status" value="1"/>
</dbReference>
<dbReference type="PANTHER" id="PTHR43584">
    <property type="entry name" value="NUCLEOTIDYL TRANSFERASE"/>
    <property type="match status" value="1"/>
</dbReference>
<dbReference type="Pfam" id="PF00132">
    <property type="entry name" value="Hexapep"/>
    <property type="match status" value="1"/>
</dbReference>
<dbReference type="Pfam" id="PF12804">
    <property type="entry name" value="NTP_transf_3"/>
    <property type="match status" value="1"/>
</dbReference>
<dbReference type="SUPFAM" id="SSF53448">
    <property type="entry name" value="Nucleotide-diphospho-sugar transferases"/>
    <property type="match status" value="1"/>
</dbReference>
<dbReference type="SUPFAM" id="SSF51161">
    <property type="entry name" value="Trimeric LpxA-like enzymes"/>
    <property type="match status" value="1"/>
</dbReference>
<dbReference type="PROSITE" id="PS00101">
    <property type="entry name" value="HEXAPEP_TRANSFERASES"/>
    <property type="match status" value="1"/>
</dbReference>